<comment type="function">
    <text evidence="1">Catalyzes the decarboxylation of four acetate groups of uroporphyrinogen-III to yield coproporphyrinogen-III.</text>
</comment>
<comment type="catalytic activity">
    <reaction evidence="1">
        <text>uroporphyrinogen III + 4 H(+) = coproporphyrinogen III + 4 CO2</text>
        <dbReference type="Rhea" id="RHEA:19865"/>
        <dbReference type="ChEBI" id="CHEBI:15378"/>
        <dbReference type="ChEBI" id="CHEBI:16526"/>
        <dbReference type="ChEBI" id="CHEBI:57308"/>
        <dbReference type="ChEBI" id="CHEBI:57309"/>
        <dbReference type="EC" id="4.1.1.37"/>
    </reaction>
</comment>
<comment type="pathway">
    <text evidence="1">Porphyrin-containing compound metabolism; protoporphyrin-IX biosynthesis; coproporphyrinogen-III from 5-aminolevulinate: step 4/4.</text>
</comment>
<comment type="subunit">
    <text evidence="1">Homodimer.</text>
</comment>
<comment type="subcellular location">
    <subcellularLocation>
        <location evidence="1">Cytoplasm</location>
    </subcellularLocation>
</comment>
<comment type="similarity">
    <text evidence="1">Belongs to the uroporphyrinogen decarboxylase family.</text>
</comment>
<feature type="chain" id="PRO_1000100010" description="Uroporphyrinogen decarboxylase">
    <location>
        <begin position="1"/>
        <end position="367"/>
    </location>
</feature>
<feature type="binding site" evidence="1">
    <location>
        <begin position="28"/>
        <end position="32"/>
    </location>
    <ligand>
        <name>substrate</name>
    </ligand>
</feature>
<feature type="binding site" evidence="1">
    <location>
        <position position="78"/>
    </location>
    <ligand>
        <name>substrate</name>
    </ligand>
</feature>
<feature type="binding site" evidence="1">
    <location>
        <position position="158"/>
    </location>
    <ligand>
        <name>substrate</name>
    </ligand>
</feature>
<feature type="binding site" evidence="1">
    <location>
        <position position="213"/>
    </location>
    <ligand>
        <name>substrate</name>
    </ligand>
</feature>
<feature type="binding site" evidence="1">
    <location>
        <position position="334"/>
    </location>
    <ligand>
        <name>substrate</name>
    </ligand>
</feature>
<feature type="site" description="Transition state stabilizer" evidence="1">
    <location>
        <position position="78"/>
    </location>
</feature>
<protein>
    <recommendedName>
        <fullName evidence="1">Uroporphyrinogen decarboxylase</fullName>
        <shortName evidence="1">UPD</shortName>
        <shortName evidence="1">URO-D</shortName>
        <ecNumber evidence="1">4.1.1.37</ecNumber>
    </recommendedName>
</protein>
<keyword id="KW-0963">Cytoplasm</keyword>
<keyword id="KW-0210">Decarboxylase</keyword>
<keyword id="KW-0456">Lyase</keyword>
<keyword id="KW-0627">Porphyrin biosynthesis</keyword>
<accession>B2UGT5</accession>
<proteinExistence type="inferred from homology"/>
<gene>
    <name evidence="1" type="primary">hemE</name>
    <name type="ordered locus">Rpic_3498</name>
</gene>
<name>DCUP_RALPJ</name>
<organism>
    <name type="scientific">Ralstonia pickettii (strain 12J)</name>
    <dbReference type="NCBI Taxonomy" id="402626"/>
    <lineage>
        <taxon>Bacteria</taxon>
        <taxon>Pseudomonadati</taxon>
        <taxon>Pseudomonadota</taxon>
        <taxon>Betaproteobacteria</taxon>
        <taxon>Burkholderiales</taxon>
        <taxon>Burkholderiaceae</taxon>
        <taxon>Ralstonia</taxon>
    </lineage>
</organism>
<dbReference type="EC" id="4.1.1.37" evidence="1"/>
<dbReference type="EMBL" id="CP001068">
    <property type="protein sequence ID" value="ACD28618.1"/>
    <property type="molecule type" value="Genomic_DNA"/>
</dbReference>
<dbReference type="SMR" id="B2UGT5"/>
<dbReference type="STRING" id="402626.Rpic_3498"/>
<dbReference type="KEGG" id="rpi:Rpic_3498"/>
<dbReference type="PATRIC" id="fig|402626.5.peg.4633"/>
<dbReference type="eggNOG" id="COG0407">
    <property type="taxonomic scope" value="Bacteria"/>
</dbReference>
<dbReference type="HOGENOM" id="CLU_040933_0_0_4"/>
<dbReference type="UniPathway" id="UPA00251">
    <property type="reaction ID" value="UER00321"/>
</dbReference>
<dbReference type="GO" id="GO:0005829">
    <property type="term" value="C:cytosol"/>
    <property type="evidence" value="ECO:0007669"/>
    <property type="project" value="TreeGrafter"/>
</dbReference>
<dbReference type="GO" id="GO:0004853">
    <property type="term" value="F:uroporphyrinogen decarboxylase activity"/>
    <property type="evidence" value="ECO:0007669"/>
    <property type="project" value="UniProtKB-UniRule"/>
</dbReference>
<dbReference type="GO" id="GO:0019353">
    <property type="term" value="P:protoporphyrinogen IX biosynthetic process from glutamate"/>
    <property type="evidence" value="ECO:0007669"/>
    <property type="project" value="TreeGrafter"/>
</dbReference>
<dbReference type="CDD" id="cd00717">
    <property type="entry name" value="URO-D"/>
    <property type="match status" value="1"/>
</dbReference>
<dbReference type="FunFam" id="3.20.20.210:FF:000001">
    <property type="entry name" value="Uroporphyrinogen decarboxylase"/>
    <property type="match status" value="1"/>
</dbReference>
<dbReference type="Gene3D" id="3.20.20.210">
    <property type="match status" value="1"/>
</dbReference>
<dbReference type="HAMAP" id="MF_00218">
    <property type="entry name" value="URO_D"/>
    <property type="match status" value="1"/>
</dbReference>
<dbReference type="InterPro" id="IPR038071">
    <property type="entry name" value="UROD/MetE-like_sf"/>
</dbReference>
<dbReference type="InterPro" id="IPR006361">
    <property type="entry name" value="Uroporphyrinogen_deCO2ase_HemE"/>
</dbReference>
<dbReference type="InterPro" id="IPR000257">
    <property type="entry name" value="Uroporphyrinogen_deCOase"/>
</dbReference>
<dbReference type="NCBIfam" id="TIGR01464">
    <property type="entry name" value="hemE"/>
    <property type="match status" value="1"/>
</dbReference>
<dbReference type="PANTHER" id="PTHR21091">
    <property type="entry name" value="METHYLTETRAHYDROFOLATE:HOMOCYSTEINE METHYLTRANSFERASE RELATED"/>
    <property type="match status" value="1"/>
</dbReference>
<dbReference type="PANTHER" id="PTHR21091:SF169">
    <property type="entry name" value="UROPORPHYRINOGEN DECARBOXYLASE"/>
    <property type="match status" value="1"/>
</dbReference>
<dbReference type="Pfam" id="PF01208">
    <property type="entry name" value="URO-D"/>
    <property type="match status" value="1"/>
</dbReference>
<dbReference type="SUPFAM" id="SSF51726">
    <property type="entry name" value="UROD/MetE-like"/>
    <property type="match status" value="1"/>
</dbReference>
<dbReference type="PROSITE" id="PS00906">
    <property type="entry name" value="UROD_1"/>
    <property type="match status" value="1"/>
</dbReference>
<dbReference type="PROSITE" id="PS00907">
    <property type="entry name" value="UROD_2"/>
    <property type="match status" value="1"/>
</dbReference>
<sequence length="367" mass="39733">MSAPLANDTFLRALRRQPTDYTPLWLMRQAGRYLPEYNATRARAGSFLGLAKSPAYATEVTLQPLDRYALDAAILFSDILTVPDAMGLGLSFAQGEGPRFAKPVRTEADVAALSVPDMSSLQYVFDAVAEIRRALVQDGRQRVPLIGFSGSPWTLACYMVEGGGSDDFRTVKSMLYARPDLMHRILEINAQAVIDYLNAQIDAGAQAVQVFDTWGGALADGIYQQFSLAYMARVVEGIRAGADGQRVPVILFTKGGGLWLEAMAETGADALGVDWTVNLQLARQRTAGRVALQGNLDPTVLFAEPDAIRAQVRRVLEDYAAGGGSDGHIFNLGHGISQFTPPEAVSVLVDEVHSFSRALRTKARSHG</sequence>
<reference key="1">
    <citation type="submission" date="2008-05" db="EMBL/GenBank/DDBJ databases">
        <title>Complete sequence of chromosome 1 of Ralstonia pickettii 12J.</title>
        <authorList>
            <person name="Lucas S."/>
            <person name="Copeland A."/>
            <person name="Lapidus A."/>
            <person name="Glavina del Rio T."/>
            <person name="Dalin E."/>
            <person name="Tice H."/>
            <person name="Bruce D."/>
            <person name="Goodwin L."/>
            <person name="Pitluck S."/>
            <person name="Meincke L."/>
            <person name="Brettin T."/>
            <person name="Detter J.C."/>
            <person name="Han C."/>
            <person name="Kuske C.R."/>
            <person name="Schmutz J."/>
            <person name="Larimer F."/>
            <person name="Land M."/>
            <person name="Hauser L."/>
            <person name="Kyrpides N."/>
            <person name="Mikhailova N."/>
            <person name="Marsh T."/>
            <person name="Richardson P."/>
        </authorList>
    </citation>
    <scope>NUCLEOTIDE SEQUENCE [LARGE SCALE GENOMIC DNA]</scope>
    <source>
        <strain>12J</strain>
    </source>
</reference>
<evidence type="ECO:0000255" key="1">
    <source>
        <dbReference type="HAMAP-Rule" id="MF_00218"/>
    </source>
</evidence>